<evidence type="ECO:0000250" key="1"/>
<evidence type="ECO:0000255" key="2"/>
<evidence type="ECO:0000255" key="3">
    <source>
        <dbReference type="PROSITE-ProRule" id="PRU00031"/>
    </source>
</evidence>
<evidence type="ECO:0000269" key="4">
    <source>
    </source>
</evidence>
<evidence type="ECO:0000303" key="5">
    <source>
    </source>
</evidence>
<evidence type="ECO:0000303" key="6">
    <source>
    </source>
</evidence>
<evidence type="ECO:0000305" key="7"/>
<evidence type="ECO:0000305" key="8">
    <source>
    </source>
</evidence>
<evidence type="ECO:0000312" key="9">
    <source>
        <dbReference type="EMBL" id="AHY30315.1"/>
    </source>
</evidence>
<comment type="function">
    <text evidence="4">Serine protease inhibitor that inhibits trypsin (Ki=0.281 nM), kallikrein (Ki=337 nM), and chymotrypsin (PubMed:24418069).</text>
</comment>
<comment type="subcellular location">
    <subcellularLocation>
        <location evidence="8">Secreted</location>
    </subcellularLocation>
</comment>
<comment type="tissue specificity">
    <text evidence="8">Expressed by the venom gland.</text>
</comment>
<comment type="miscellaneous">
    <text evidence="4">Negative results: the recombinant toxin does not show activity on Kv1.1/KCNA1, Kv1.2/KCNA2, Kv1.3/KCNA3, Kv2.1/KCNB1 and Kv4.3/KCND3 channels, as well as on calcium (Cav) and sodium channels (Nav). It also does not show detectable activity on thrombin.</text>
</comment>
<comment type="similarity">
    <text evidence="7">Belongs to the venom Kunitz-type family. 02 (native) subfamily.</text>
</comment>
<dbReference type="EMBL" id="KF160304">
    <property type="protein sequence ID" value="AHY30315.1"/>
    <property type="molecule type" value="Genomic_DNA"/>
</dbReference>
<dbReference type="SMR" id="P0DJ82"/>
<dbReference type="ArachnoServer" id="AS002014">
    <property type="toxin name" value="kappa-theraphotoxin-Hs1c"/>
</dbReference>
<dbReference type="GO" id="GO:0005615">
    <property type="term" value="C:extracellular space"/>
    <property type="evidence" value="ECO:0007669"/>
    <property type="project" value="TreeGrafter"/>
</dbReference>
<dbReference type="GO" id="GO:0015459">
    <property type="term" value="F:potassium channel regulator activity"/>
    <property type="evidence" value="ECO:0007669"/>
    <property type="project" value="UniProtKB-KW"/>
</dbReference>
<dbReference type="GO" id="GO:0004867">
    <property type="term" value="F:serine-type endopeptidase inhibitor activity"/>
    <property type="evidence" value="ECO:0007669"/>
    <property type="project" value="UniProtKB-KW"/>
</dbReference>
<dbReference type="GO" id="GO:0090729">
    <property type="term" value="F:toxin activity"/>
    <property type="evidence" value="ECO:0007669"/>
    <property type="project" value="UniProtKB-KW"/>
</dbReference>
<dbReference type="GO" id="GO:0044562">
    <property type="term" value="P:envenomation resulting in negative regulation of voltage-gated potassium channel activity in another organism"/>
    <property type="evidence" value="ECO:0007669"/>
    <property type="project" value="UniProtKB-ARBA"/>
</dbReference>
<dbReference type="CDD" id="cd22598">
    <property type="entry name" value="Kunitz_huwentoxin"/>
    <property type="match status" value="1"/>
</dbReference>
<dbReference type="FunFam" id="4.10.410.10:FF:000020">
    <property type="entry name" value="Collagen, type VI, alpha 3"/>
    <property type="match status" value="1"/>
</dbReference>
<dbReference type="Gene3D" id="4.10.410.10">
    <property type="entry name" value="Pancreatic trypsin inhibitor Kunitz domain"/>
    <property type="match status" value="1"/>
</dbReference>
<dbReference type="InterPro" id="IPR002223">
    <property type="entry name" value="Kunitz_BPTI"/>
</dbReference>
<dbReference type="InterPro" id="IPR036880">
    <property type="entry name" value="Kunitz_BPTI_sf"/>
</dbReference>
<dbReference type="InterPro" id="IPR020901">
    <property type="entry name" value="Prtase_inh_Kunz-CS"/>
</dbReference>
<dbReference type="InterPro" id="IPR050098">
    <property type="entry name" value="TFPI/VKTCI-like"/>
</dbReference>
<dbReference type="PANTHER" id="PTHR10083:SF374">
    <property type="entry name" value="BPTI_KUNITZ INHIBITOR DOMAIN-CONTAINING PROTEIN"/>
    <property type="match status" value="1"/>
</dbReference>
<dbReference type="PANTHER" id="PTHR10083">
    <property type="entry name" value="KUNITZ-TYPE PROTEASE INHIBITOR-RELATED"/>
    <property type="match status" value="1"/>
</dbReference>
<dbReference type="Pfam" id="PF00014">
    <property type="entry name" value="Kunitz_BPTI"/>
    <property type="match status" value="1"/>
</dbReference>
<dbReference type="PRINTS" id="PR00759">
    <property type="entry name" value="BASICPTASE"/>
</dbReference>
<dbReference type="SMART" id="SM00131">
    <property type="entry name" value="KU"/>
    <property type="match status" value="1"/>
</dbReference>
<dbReference type="SUPFAM" id="SSF57362">
    <property type="entry name" value="BPTI-like"/>
    <property type="match status" value="1"/>
</dbReference>
<dbReference type="PROSITE" id="PS00280">
    <property type="entry name" value="BPTI_KUNITZ_1"/>
    <property type="match status" value="1"/>
</dbReference>
<dbReference type="PROSITE" id="PS50279">
    <property type="entry name" value="BPTI_KUNITZ_2"/>
    <property type="match status" value="1"/>
</dbReference>
<accession>P0DJ82</accession>
<accession>A0A023WAJ0</accession>
<organism>
    <name type="scientific">Cyriopagopus schmidti</name>
    <name type="common">Chinese bird spider</name>
    <name type="synonym">Haplopelma schmidti</name>
    <dbReference type="NCBI Taxonomy" id="29017"/>
    <lineage>
        <taxon>Eukaryota</taxon>
        <taxon>Metazoa</taxon>
        <taxon>Ecdysozoa</taxon>
        <taxon>Arthropoda</taxon>
        <taxon>Chelicerata</taxon>
        <taxon>Arachnida</taxon>
        <taxon>Araneae</taxon>
        <taxon>Mygalomorphae</taxon>
        <taxon>Theraphosidae</taxon>
        <taxon>Cyriopagopus</taxon>
    </lineage>
</organism>
<protein>
    <recommendedName>
        <fullName>Kunitz-type kappaPI-theraphotoxin-Hs1c</fullName>
        <shortName>kappaPI-TRTX-Hs1c</shortName>
    </recommendedName>
    <alternativeName>
        <fullName evidence="6">Huwentoxin HW11c27</fullName>
    </alternativeName>
    <alternativeName>
        <fullName evidence="5">Kunitz-type serine protease inhibitor HWTX-XI-IS27</fullName>
    </alternativeName>
</protein>
<name>VKT27_CYRSC</name>
<keyword id="KW-1015">Disulfide bond</keyword>
<keyword id="KW-0646">Protease inhibitor</keyword>
<keyword id="KW-0964">Secreted</keyword>
<keyword id="KW-0722">Serine protease inhibitor</keyword>
<keyword id="KW-0732">Signal</keyword>
<reference key="1">
    <citation type="journal article" date="2008" name="PLoS ONE">
        <title>Discovery of a distinct superfamily of Kunitz-type toxin (KTT) from tarantulas.</title>
        <authorList>
            <person name="Yuan C.-H."/>
            <person name="He Q.-Y."/>
            <person name="Peng K."/>
            <person name="Diao J.-B."/>
            <person name="Jiang L.-P."/>
            <person name="Tang X."/>
            <person name="Liang S.-P."/>
        </authorList>
    </citation>
    <scope>NUCLEOTIDE SEQUENCE [MRNA]</scope>
    <source>
        <tissue>Venom gland</tissue>
    </source>
</reference>
<reference evidence="9" key="2">
    <citation type="journal article" date="2014" name="Peptides">
        <title>Molecular cloning, bioinformatics analysis and functional characterization of HWTX-XI toxin superfamily from the spider Ornithoctonus huwena.</title>
        <authorList>
            <person name="Jiang L."/>
            <person name="Deng M."/>
            <person name="Duan Z."/>
            <person name="Tang X."/>
            <person name="Liang S."/>
        </authorList>
    </citation>
    <scope>NUCLEOTIDE SEQUENCE [GENOMIC DNA]</scope>
    <scope>FUNCTION</scope>
    <scope>RECOMBINANT EXPRESSION</scope>
</reference>
<proteinExistence type="inferred from homology"/>
<feature type="signal peptide" evidence="2">
    <location>
        <begin position="1"/>
        <end position="27"/>
    </location>
</feature>
<feature type="propeptide" id="PRO_0000413838" evidence="1">
    <location>
        <begin position="28"/>
        <end position="33"/>
    </location>
</feature>
<feature type="chain" id="PRO_0000413839" description="Kunitz-type kappaPI-theraphotoxin-Hs1c">
    <location>
        <begin position="34"/>
        <end position="88"/>
    </location>
</feature>
<feature type="domain" description="BPTI/Kunitz inhibitor" evidence="3">
    <location>
        <begin position="37"/>
        <end position="85"/>
    </location>
</feature>
<feature type="site" description="May bind Kv1.x/KCNA" evidence="1">
    <location>
        <position position="39"/>
    </location>
</feature>
<feature type="site" description="Reactive bond for trypsin" evidence="1">
    <location>
        <begin position="47"/>
        <end position="48"/>
    </location>
</feature>
<feature type="disulfide bond" evidence="3">
    <location>
        <begin position="37"/>
        <end position="85"/>
    </location>
</feature>
<feature type="disulfide bond" evidence="3">
    <location>
        <begin position="46"/>
        <end position="68"/>
    </location>
</feature>
<feature type="disulfide bond" evidence="3">
    <location>
        <begin position="60"/>
        <end position="81"/>
    </location>
</feature>
<sequence>MGIARILSAVLFLSVLFVVTFPALLSADHHDGRIDTCRLPSDRGRCKASFECWYFNGRTCAKFIYGGCGGNGNKFPTQEACMKRCAKA</sequence>